<evidence type="ECO:0000250" key="1"/>
<evidence type="ECO:0000255" key="2">
    <source>
        <dbReference type="HAMAP-Rule" id="MF_00100"/>
    </source>
</evidence>
<proteinExistence type="inferred from homology"/>
<name>IF2P_METMA</name>
<comment type="function">
    <text evidence="2">Function in general translation initiation by promoting the binding of the formylmethionine-tRNA to ribosomes. Seems to function along with eIF-2.</text>
</comment>
<comment type="similarity">
    <text evidence="2">Belongs to the TRAFAC class translation factor GTPase superfamily. Classic translation factor GTPase family. IF-2 subfamily.</text>
</comment>
<organism>
    <name type="scientific">Methanosarcina mazei (strain ATCC BAA-159 / DSM 3647 / Goe1 / Go1 / JCM 11833 / OCM 88)</name>
    <name type="common">Methanosarcina frisia</name>
    <dbReference type="NCBI Taxonomy" id="192952"/>
    <lineage>
        <taxon>Archaea</taxon>
        <taxon>Methanobacteriati</taxon>
        <taxon>Methanobacteriota</taxon>
        <taxon>Stenosarchaea group</taxon>
        <taxon>Methanomicrobia</taxon>
        <taxon>Methanosarcinales</taxon>
        <taxon>Methanosarcinaceae</taxon>
        <taxon>Methanosarcina</taxon>
    </lineage>
</organism>
<accession>Q8PU78</accession>
<sequence length="591" mass="64901">MTDKKNLRTPIVCVMGHVDHGKTTLLDKIRGTAIVSGEAGAITQHIGATEVPIDVIIDKLGDPRLRDRFMVPGLLFIDTPGHHAFTTLRSRGGALADLAIVVVDINEGFKPQTYESLQILKRFKTPFVVVANKIDRIGGWVSQKDMPFAATFKKQSSDVQARLETKLYEVIGELYNQGFAAERYDRVTNFQKTLGVVPVSAFTGEGIPDVLMVLLGLAQKFLEANLQYSAKGPGVGTVLEVKEEKGLGATLDIILYDGTLKKGDTVVIGSLGEPIRTKVRALLKPRELSEIRYESKFQQVSKVTAAAGVKISAPGLEGALAGSPIRVATEDNLEEIASQVKSEIDEVRIDTGSVGIMIKADTLGSLEALVHEFQKDEVPIRKAEVGDISHRDAVEASTVEDPLYSVIIGFNVKVHPDARDFLQESSVKVFTSDVIYRLVEDYQKYVKEQQEKAEKKIFETIIRPGKFKILPGCVFRQSKPAVVGVRVLGGVVRTNTDVMLENGNVVGKIKGLQSEGENIPSAKVGKEVAMAIEGATVGRQIKEEDVLYVNVPERHAKVLEHEIYESLSTDEKETLDIFLTLKRKDNPFWAK</sequence>
<feature type="chain" id="PRO_0000137303" description="Probable translation initiation factor IF-2">
    <location>
        <begin position="1"/>
        <end position="591"/>
    </location>
</feature>
<feature type="domain" description="tr-type G">
    <location>
        <begin position="7"/>
        <end position="223"/>
    </location>
</feature>
<feature type="region of interest" description="G1" evidence="1">
    <location>
        <begin position="16"/>
        <end position="23"/>
    </location>
</feature>
<feature type="region of interest" description="G2" evidence="1">
    <location>
        <begin position="41"/>
        <end position="45"/>
    </location>
</feature>
<feature type="region of interest" description="G3" evidence="1">
    <location>
        <begin position="78"/>
        <end position="81"/>
    </location>
</feature>
<feature type="region of interest" description="G4" evidence="1">
    <location>
        <begin position="132"/>
        <end position="135"/>
    </location>
</feature>
<feature type="region of interest" description="G5" evidence="1">
    <location>
        <begin position="200"/>
        <end position="202"/>
    </location>
</feature>
<feature type="binding site" evidence="2">
    <location>
        <begin position="16"/>
        <end position="23"/>
    </location>
    <ligand>
        <name>GTP</name>
        <dbReference type="ChEBI" id="CHEBI:37565"/>
    </ligand>
</feature>
<feature type="binding site" evidence="2">
    <location>
        <begin position="78"/>
        <end position="82"/>
    </location>
    <ligand>
        <name>GTP</name>
        <dbReference type="ChEBI" id="CHEBI:37565"/>
    </ligand>
</feature>
<feature type="binding site" evidence="2">
    <location>
        <begin position="132"/>
        <end position="135"/>
    </location>
    <ligand>
        <name>GTP</name>
        <dbReference type="ChEBI" id="CHEBI:37565"/>
    </ligand>
</feature>
<dbReference type="EMBL" id="AE008384">
    <property type="protein sequence ID" value="AAM32159.1"/>
    <property type="molecule type" value="Genomic_DNA"/>
</dbReference>
<dbReference type="RefSeq" id="WP_011034381.1">
    <property type="nucleotide sequence ID" value="NC_003901.1"/>
</dbReference>
<dbReference type="SMR" id="Q8PU78"/>
<dbReference type="GeneID" id="82161537"/>
<dbReference type="KEGG" id="mma:MM_2463"/>
<dbReference type="PATRIC" id="fig|192952.21.peg.2818"/>
<dbReference type="eggNOG" id="arCOG01560">
    <property type="taxonomic scope" value="Archaea"/>
</dbReference>
<dbReference type="HOGENOM" id="CLU_002656_3_3_2"/>
<dbReference type="Proteomes" id="UP000000595">
    <property type="component" value="Chromosome"/>
</dbReference>
<dbReference type="GO" id="GO:0005737">
    <property type="term" value="C:cytoplasm"/>
    <property type="evidence" value="ECO:0007669"/>
    <property type="project" value="TreeGrafter"/>
</dbReference>
<dbReference type="GO" id="GO:0005525">
    <property type="term" value="F:GTP binding"/>
    <property type="evidence" value="ECO:0007669"/>
    <property type="project" value="UniProtKB-KW"/>
</dbReference>
<dbReference type="GO" id="GO:0003924">
    <property type="term" value="F:GTPase activity"/>
    <property type="evidence" value="ECO:0007669"/>
    <property type="project" value="UniProtKB-UniRule"/>
</dbReference>
<dbReference type="GO" id="GO:0003743">
    <property type="term" value="F:translation initiation factor activity"/>
    <property type="evidence" value="ECO:0007669"/>
    <property type="project" value="UniProtKB-UniRule"/>
</dbReference>
<dbReference type="CDD" id="cd03703">
    <property type="entry name" value="aeIF5B_II"/>
    <property type="match status" value="1"/>
</dbReference>
<dbReference type="CDD" id="cd16266">
    <property type="entry name" value="IF2_aeIF5B_IV"/>
    <property type="match status" value="1"/>
</dbReference>
<dbReference type="CDD" id="cd01887">
    <property type="entry name" value="IF2_eIF5B"/>
    <property type="match status" value="1"/>
</dbReference>
<dbReference type="FunFam" id="3.40.50.300:FF:000112">
    <property type="entry name" value="Eukaryotic translation initiation factor 5B"/>
    <property type="match status" value="1"/>
</dbReference>
<dbReference type="FunFam" id="2.40.30.10:FF:000013">
    <property type="entry name" value="eukaryotic translation initiation factor 5B"/>
    <property type="match status" value="1"/>
</dbReference>
<dbReference type="FunFam" id="2.40.30.10:FF:000152">
    <property type="entry name" value="Probable translation initiation factor IF-2"/>
    <property type="match status" value="1"/>
</dbReference>
<dbReference type="FunFam" id="3.40.50.10050:FF:000001">
    <property type="entry name" value="Translation initiation factor IF-2"/>
    <property type="match status" value="1"/>
</dbReference>
<dbReference type="Gene3D" id="3.40.50.300">
    <property type="entry name" value="P-loop containing nucleotide triphosphate hydrolases"/>
    <property type="match status" value="1"/>
</dbReference>
<dbReference type="Gene3D" id="2.40.30.10">
    <property type="entry name" value="Translation factors"/>
    <property type="match status" value="2"/>
</dbReference>
<dbReference type="Gene3D" id="3.40.50.10050">
    <property type="entry name" value="Translation initiation factor IF- 2, domain 3"/>
    <property type="match status" value="1"/>
</dbReference>
<dbReference type="HAMAP" id="MF_00100_A">
    <property type="entry name" value="IF_2_A"/>
    <property type="match status" value="1"/>
</dbReference>
<dbReference type="InterPro" id="IPR029459">
    <property type="entry name" value="EFTU-type"/>
</dbReference>
<dbReference type="InterPro" id="IPR027417">
    <property type="entry name" value="P-loop_NTPase"/>
</dbReference>
<dbReference type="InterPro" id="IPR005225">
    <property type="entry name" value="Small_GTP-bd"/>
</dbReference>
<dbReference type="InterPro" id="IPR000795">
    <property type="entry name" value="T_Tr_GTP-bd_dom"/>
</dbReference>
<dbReference type="InterPro" id="IPR004544">
    <property type="entry name" value="TF_aIF-2_arc"/>
</dbReference>
<dbReference type="InterPro" id="IPR015760">
    <property type="entry name" value="TIF_IF2"/>
</dbReference>
<dbReference type="InterPro" id="IPR023115">
    <property type="entry name" value="TIF_IF2_dom3"/>
</dbReference>
<dbReference type="InterPro" id="IPR036925">
    <property type="entry name" value="TIF_IF2_dom3_sf"/>
</dbReference>
<dbReference type="InterPro" id="IPR009000">
    <property type="entry name" value="Transl_B-barrel_sf"/>
</dbReference>
<dbReference type="NCBIfam" id="TIGR00491">
    <property type="entry name" value="aIF-2"/>
    <property type="match status" value="1"/>
</dbReference>
<dbReference type="NCBIfam" id="NF003078">
    <property type="entry name" value="PRK04004.1"/>
    <property type="match status" value="1"/>
</dbReference>
<dbReference type="NCBIfam" id="NF011418">
    <property type="entry name" value="PRK14845.1"/>
    <property type="match status" value="1"/>
</dbReference>
<dbReference type="NCBIfam" id="TIGR00231">
    <property type="entry name" value="small_GTP"/>
    <property type="match status" value="1"/>
</dbReference>
<dbReference type="PANTHER" id="PTHR43381:SF4">
    <property type="entry name" value="EUKARYOTIC TRANSLATION INITIATION FACTOR 5B"/>
    <property type="match status" value="1"/>
</dbReference>
<dbReference type="PANTHER" id="PTHR43381">
    <property type="entry name" value="TRANSLATION INITIATION FACTOR IF-2-RELATED"/>
    <property type="match status" value="1"/>
</dbReference>
<dbReference type="Pfam" id="PF00009">
    <property type="entry name" value="GTP_EFTU"/>
    <property type="match status" value="1"/>
</dbReference>
<dbReference type="Pfam" id="PF14578">
    <property type="entry name" value="GTP_EFTU_D4"/>
    <property type="match status" value="1"/>
</dbReference>
<dbReference type="Pfam" id="PF11987">
    <property type="entry name" value="IF-2"/>
    <property type="match status" value="1"/>
</dbReference>
<dbReference type="PRINTS" id="PR00315">
    <property type="entry name" value="ELONGATNFCT"/>
</dbReference>
<dbReference type="SUPFAM" id="SSF52156">
    <property type="entry name" value="Initiation factor IF2/eIF5b, domain 3"/>
    <property type="match status" value="1"/>
</dbReference>
<dbReference type="SUPFAM" id="SSF52540">
    <property type="entry name" value="P-loop containing nucleoside triphosphate hydrolases"/>
    <property type="match status" value="1"/>
</dbReference>
<dbReference type="SUPFAM" id="SSF50447">
    <property type="entry name" value="Translation proteins"/>
    <property type="match status" value="1"/>
</dbReference>
<dbReference type="PROSITE" id="PS51722">
    <property type="entry name" value="G_TR_2"/>
    <property type="match status" value="1"/>
</dbReference>
<dbReference type="PROSITE" id="PS01176">
    <property type="entry name" value="IF2"/>
    <property type="match status" value="1"/>
</dbReference>
<reference key="1">
    <citation type="journal article" date="2002" name="J. Mol. Microbiol. Biotechnol.">
        <title>The genome of Methanosarcina mazei: evidence for lateral gene transfer between Bacteria and Archaea.</title>
        <authorList>
            <person name="Deppenmeier U."/>
            <person name="Johann A."/>
            <person name="Hartsch T."/>
            <person name="Merkl R."/>
            <person name="Schmitz R.A."/>
            <person name="Martinez-Arias R."/>
            <person name="Henne A."/>
            <person name="Wiezer A."/>
            <person name="Baeumer S."/>
            <person name="Jacobi C."/>
            <person name="Brueggemann H."/>
            <person name="Lienard T."/>
            <person name="Christmann A."/>
            <person name="Boemecke M."/>
            <person name="Steckel S."/>
            <person name="Bhattacharyya A."/>
            <person name="Lykidis A."/>
            <person name="Overbeek R."/>
            <person name="Klenk H.-P."/>
            <person name="Gunsalus R.P."/>
            <person name="Fritz H.-J."/>
            <person name="Gottschalk G."/>
        </authorList>
    </citation>
    <scope>NUCLEOTIDE SEQUENCE [LARGE SCALE GENOMIC DNA]</scope>
    <source>
        <strain>ATCC BAA-159 / DSM 3647 / Goe1 / Go1 / JCM 11833 / OCM 88</strain>
    </source>
</reference>
<protein>
    <recommendedName>
        <fullName evidence="2">Probable translation initiation factor IF-2</fullName>
    </recommendedName>
</protein>
<keyword id="KW-0342">GTP-binding</keyword>
<keyword id="KW-0396">Initiation factor</keyword>
<keyword id="KW-0547">Nucleotide-binding</keyword>
<keyword id="KW-0648">Protein biosynthesis</keyword>
<gene>
    <name evidence="2" type="primary">infB</name>
    <name type="ordered locus">MM_2463</name>
</gene>